<gene>
    <name evidence="1" type="primary">rpsP</name>
    <name type="ordered locus">FTL_1738</name>
</gene>
<comment type="similarity">
    <text evidence="1">Belongs to the bacterial ribosomal protein bS16 family.</text>
</comment>
<evidence type="ECO:0000255" key="1">
    <source>
        <dbReference type="HAMAP-Rule" id="MF_00385"/>
    </source>
</evidence>
<evidence type="ECO:0000305" key="2"/>
<accession>Q2A1N3</accession>
<keyword id="KW-1185">Reference proteome</keyword>
<keyword id="KW-0687">Ribonucleoprotein</keyword>
<keyword id="KW-0689">Ribosomal protein</keyword>
<protein>
    <recommendedName>
        <fullName evidence="1">Small ribosomal subunit protein bS16</fullName>
    </recommendedName>
    <alternativeName>
        <fullName evidence="2">30S ribosomal protein S16</fullName>
    </alternativeName>
</protein>
<proteinExistence type="inferred from homology"/>
<feature type="chain" id="PRO_1000049258" description="Small ribosomal subunit protein bS16">
    <location>
        <begin position="1"/>
        <end position="82"/>
    </location>
</feature>
<reference key="1">
    <citation type="submission" date="2006-03" db="EMBL/GenBank/DDBJ databases">
        <title>Complete genome sequence of Francisella tularensis LVS (Live Vaccine Strain).</title>
        <authorList>
            <person name="Chain P."/>
            <person name="Larimer F."/>
            <person name="Land M."/>
            <person name="Stilwagen S."/>
            <person name="Larsson P."/>
            <person name="Bearden S."/>
            <person name="Chu M."/>
            <person name="Oyston P."/>
            <person name="Forsman M."/>
            <person name="Andersson S."/>
            <person name="Lindler L."/>
            <person name="Titball R."/>
            <person name="Garcia E."/>
        </authorList>
    </citation>
    <scope>NUCLEOTIDE SEQUENCE [LARGE SCALE GENOMIC DNA]</scope>
    <source>
        <strain>LVS</strain>
    </source>
</reference>
<name>RS16_FRATH</name>
<sequence>MVVIRMARGGAKKRSFYRIVVADKRSPRDGRFIEKLGFFNPLAKGGEERLKLDVAKAEAWLAKGAQPSDRVASLIKEAKKAA</sequence>
<dbReference type="EMBL" id="AM233362">
    <property type="protein sequence ID" value="CAJ80177.1"/>
    <property type="molecule type" value="Genomic_DNA"/>
</dbReference>
<dbReference type="RefSeq" id="WP_003017217.1">
    <property type="nucleotide sequence ID" value="NZ_CP009694.1"/>
</dbReference>
<dbReference type="SMR" id="Q2A1N3"/>
<dbReference type="KEGG" id="ftl:FTL_1738"/>
<dbReference type="Proteomes" id="UP000001944">
    <property type="component" value="Chromosome"/>
</dbReference>
<dbReference type="GO" id="GO:0005737">
    <property type="term" value="C:cytoplasm"/>
    <property type="evidence" value="ECO:0007669"/>
    <property type="project" value="UniProtKB-ARBA"/>
</dbReference>
<dbReference type="GO" id="GO:0015935">
    <property type="term" value="C:small ribosomal subunit"/>
    <property type="evidence" value="ECO:0007669"/>
    <property type="project" value="TreeGrafter"/>
</dbReference>
<dbReference type="GO" id="GO:0003735">
    <property type="term" value="F:structural constituent of ribosome"/>
    <property type="evidence" value="ECO:0007669"/>
    <property type="project" value="InterPro"/>
</dbReference>
<dbReference type="GO" id="GO:0006412">
    <property type="term" value="P:translation"/>
    <property type="evidence" value="ECO:0007669"/>
    <property type="project" value="UniProtKB-UniRule"/>
</dbReference>
<dbReference type="Gene3D" id="3.30.1320.10">
    <property type="match status" value="1"/>
</dbReference>
<dbReference type="HAMAP" id="MF_00385">
    <property type="entry name" value="Ribosomal_bS16"/>
    <property type="match status" value="1"/>
</dbReference>
<dbReference type="InterPro" id="IPR000307">
    <property type="entry name" value="Ribosomal_bS16"/>
</dbReference>
<dbReference type="InterPro" id="IPR023803">
    <property type="entry name" value="Ribosomal_bS16_dom_sf"/>
</dbReference>
<dbReference type="NCBIfam" id="TIGR00002">
    <property type="entry name" value="S16"/>
    <property type="match status" value="1"/>
</dbReference>
<dbReference type="PANTHER" id="PTHR12919">
    <property type="entry name" value="30S RIBOSOMAL PROTEIN S16"/>
    <property type="match status" value="1"/>
</dbReference>
<dbReference type="PANTHER" id="PTHR12919:SF20">
    <property type="entry name" value="SMALL RIBOSOMAL SUBUNIT PROTEIN BS16M"/>
    <property type="match status" value="1"/>
</dbReference>
<dbReference type="Pfam" id="PF00886">
    <property type="entry name" value="Ribosomal_S16"/>
    <property type="match status" value="1"/>
</dbReference>
<dbReference type="SUPFAM" id="SSF54565">
    <property type="entry name" value="Ribosomal protein S16"/>
    <property type="match status" value="1"/>
</dbReference>
<organism>
    <name type="scientific">Francisella tularensis subsp. holarctica (strain LVS)</name>
    <dbReference type="NCBI Taxonomy" id="376619"/>
    <lineage>
        <taxon>Bacteria</taxon>
        <taxon>Pseudomonadati</taxon>
        <taxon>Pseudomonadota</taxon>
        <taxon>Gammaproteobacteria</taxon>
        <taxon>Thiotrichales</taxon>
        <taxon>Francisellaceae</taxon>
        <taxon>Francisella</taxon>
    </lineage>
</organism>